<gene>
    <name evidence="1" type="primary">rimM</name>
    <name type="ordered locus">Teth514_1710</name>
</gene>
<dbReference type="EMBL" id="CP000923">
    <property type="protein sequence ID" value="ABY92996.1"/>
    <property type="molecule type" value="Genomic_DNA"/>
</dbReference>
<dbReference type="RefSeq" id="WP_003866681.1">
    <property type="nucleotide sequence ID" value="NC_010320.1"/>
</dbReference>
<dbReference type="SMR" id="B0K1U8"/>
<dbReference type="KEGG" id="tex:Teth514_1710"/>
<dbReference type="HOGENOM" id="CLU_077636_3_2_9"/>
<dbReference type="Proteomes" id="UP000002155">
    <property type="component" value="Chromosome"/>
</dbReference>
<dbReference type="GO" id="GO:0005737">
    <property type="term" value="C:cytoplasm"/>
    <property type="evidence" value="ECO:0007669"/>
    <property type="project" value="UniProtKB-SubCell"/>
</dbReference>
<dbReference type="GO" id="GO:0005840">
    <property type="term" value="C:ribosome"/>
    <property type="evidence" value="ECO:0007669"/>
    <property type="project" value="InterPro"/>
</dbReference>
<dbReference type="GO" id="GO:0043022">
    <property type="term" value="F:ribosome binding"/>
    <property type="evidence" value="ECO:0007669"/>
    <property type="project" value="InterPro"/>
</dbReference>
<dbReference type="GO" id="GO:0042274">
    <property type="term" value="P:ribosomal small subunit biogenesis"/>
    <property type="evidence" value="ECO:0007669"/>
    <property type="project" value="UniProtKB-UniRule"/>
</dbReference>
<dbReference type="GO" id="GO:0006364">
    <property type="term" value="P:rRNA processing"/>
    <property type="evidence" value="ECO:0007669"/>
    <property type="project" value="UniProtKB-UniRule"/>
</dbReference>
<dbReference type="Gene3D" id="2.30.30.240">
    <property type="entry name" value="PRC-barrel domain"/>
    <property type="match status" value="1"/>
</dbReference>
<dbReference type="Gene3D" id="2.40.30.60">
    <property type="entry name" value="RimM"/>
    <property type="match status" value="1"/>
</dbReference>
<dbReference type="HAMAP" id="MF_00014">
    <property type="entry name" value="Ribosome_mat_RimM"/>
    <property type="match status" value="1"/>
</dbReference>
<dbReference type="InterPro" id="IPR011033">
    <property type="entry name" value="PRC_barrel-like_sf"/>
</dbReference>
<dbReference type="InterPro" id="IPR056792">
    <property type="entry name" value="PRC_RimM"/>
</dbReference>
<dbReference type="InterPro" id="IPR011961">
    <property type="entry name" value="RimM"/>
</dbReference>
<dbReference type="InterPro" id="IPR002676">
    <property type="entry name" value="RimM_N"/>
</dbReference>
<dbReference type="InterPro" id="IPR036976">
    <property type="entry name" value="RimM_N_sf"/>
</dbReference>
<dbReference type="InterPro" id="IPR009000">
    <property type="entry name" value="Transl_B-barrel_sf"/>
</dbReference>
<dbReference type="NCBIfam" id="TIGR02273">
    <property type="entry name" value="16S_RimM"/>
    <property type="match status" value="1"/>
</dbReference>
<dbReference type="PANTHER" id="PTHR33692">
    <property type="entry name" value="RIBOSOME MATURATION FACTOR RIMM"/>
    <property type="match status" value="1"/>
</dbReference>
<dbReference type="PANTHER" id="PTHR33692:SF1">
    <property type="entry name" value="RIBOSOME MATURATION FACTOR RIMM"/>
    <property type="match status" value="1"/>
</dbReference>
<dbReference type="Pfam" id="PF24986">
    <property type="entry name" value="PRC_RimM"/>
    <property type="match status" value="1"/>
</dbReference>
<dbReference type="Pfam" id="PF01782">
    <property type="entry name" value="RimM"/>
    <property type="match status" value="1"/>
</dbReference>
<dbReference type="SUPFAM" id="SSF50346">
    <property type="entry name" value="PRC-barrel domain"/>
    <property type="match status" value="1"/>
</dbReference>
<dbReference type="SUPFAM" id="SSF50447">
    <property type="entry name" value="Translation proteins"/>
    <property type="match status" value="1"/>
</dbReference>
<comment type="function">
    <text evidence="1">An accessory protein needed during the final step in the assembly of 30S ribosomal subunit, possibly for assembly of the head region. Essential for efficient processing of 16S rRNA. May be needed both before and after RbfA during the maturation of 16S rRNA. It has affinity for free ribosomal 30S subunits but not for 70S ribosomes.</text>
</comment>
<comment type="subunit">
    <text evidence="1">Binds ribosomal protein uS19.</text>
</comment>
<comment type="subcellular location">
    <subcellularLocation>
        <location evidence="1">Cytoplasm</location>
    </subcellularLocation>
</comment>
<comment type="domain">
    <text evidence="1">The PRC barrel domain binds ribosomal protein uS19.</text>
</comment>
<comment type="similarity">
    <text evidence="1">Belongs to the RimM family.</text>
</comment>
<keyword id="KW-0143">Chaperone</keyword>
<keyword id="KW-0963">Cytoplasm</keyword>
<keyword id="KW-0690">Ribosome biogenesis</keyword>
<keyword id="KW-0698">rRNA processing</keyword>
<evidence type="ECO:0000255" key="1">
    <source>
        <dbReference type="HAMAP-Rule" id="MF_00014"/>
    </source>
</evidence>
<protein>
    <recommendedName>
        <fullName evidence="1">Ribosome maturation factor RimM</fullName>
    </recommendedName>
</protein>
<proteinExistence type="inferred from homology"/>
<feature type="chain" id="PRO_1000089530" description="Ribosome maturation factor RimM">
    <location>
        <begin position="1"/>
        <end position="167"/>
    </location>
</feature>
<feature type="domain" description="PRC barrel" evidence="1">
    <location>
        <begin position="94"/>
        <end position="167"/>
    </location>
</feature>
<name>RIMM_THEPX</name>
<organism>
    <name type="scientific">Thermoanaerobacter sp. (strain X514)</name>
    <dbReference type="NCBI Taxonomy" id="399726"/>
    <lineage>
        <taxon>Bacteria</taxon>
        <taxon>Bacillati</taxon>
        <taxon>Bacillota</taxon>
        <taxon>Clostridia</taxon>
        <taxon>Thermoanaerobacterales</taxon>
        <taxon>Thermoanaerobacteraceae</taxon>
        <taxon>Thermoanaerobacter</taxon>
    </lineage>
</organism>
<reference key="1">
    <citation type="submission" date="2008-01" db="EMBL/GenBank/DDBJ databases">
        <title>Complete sequence of Thermoanaerobacter sp. X514.</title>
        <authorList>
            <consortium name="US DOE Joint Genome Institute"/>
            <person name="Copeland A."/>
            <person name="Lucas S."/>
            <person name="Lapidus A."/>
            <person name="Barry K."/>
            <person name="Glavina del Rio T."/>
            <person name="Dalin E."/>
            <person name="Tice H."/>
            <person name="Pitluck S."/>
            <person name="Bruce D."/>
            <person name="Goodwin L."/>
            <person name="Saunders E."/>
            <person name="Brettin T."/>
            <person name="Detter J.C."/>
            <person name="Han C."/>
            <person name="Schmutz J."/>
            <person name="Larimer F."/>
            <person name="Land M."/>
            <person name="Hauser L."/>
            <person name="Kyrpides N."/>
            <person name="Kim E."/>
            <person name="Hemme C."/>
            <person name="Fields M.W."/>
            <person name="He Z."/>
            <person name="Zhou J."/>
            <person name="Richardson P."/>
        </authorList>
    </citation>
    <scope>NUCLEOTIDE SEQUENCE [LARGE SCALE GENOMIC DNA]</scope>
    <source>
        <strain>X514</strain>
    </source>
</reference>
<accession>B0K1U8</accession>
<sequence length="167" mass="19034">MADYYNVGKVTSAHGIKGEVKVYPLTNVPERFYDLEYVWIFDDQQRPHKYDIEYVKIISKGVCVKLKGIDTRGDAEKLKGAFLKVDSQNALELEENEYFIKDLVGMKVYTEEGSFLGTLVEVLKTGANDVYVIKTEEREILIPAIKEVVKKVDVDNKVMVVHLLEGL</sequence>